<feature type="chain" id="PRO_1000064589" description="UPF0266 membrane protein YobD">
    <location>
        <begin position="1"/>
        <end position="152"/>
    </location>
</feature>
<feature type="transmembrane region" description="Helical" evidence="1">
    <location>
        <begin position="6"/>
        <end position="26"/>
    </location>
</feature>
<feature type="transmembrane region" description="Helical" evidence="1">
    <location>
        <begin position="45"/>
        <end position="65"/>
    </location>
</feature>
<feature type="transmembrane region" description="Helical" evidence="1">
    <location>
        <begin position="67"/>
        <end position="87"/>
    </location>
</feature>
<reference key="1">
    <citation type="journal article" date="2004" name="Nat. Genet.">
        <title>Comparison of genome degradation in Paratyphi A and Typhi, human-restricted serovars of Salmonella enterica that cause typhoid.</title>
        <authorList>
            <person name="McClelland M."/>
            <person name="Sanderson K.E."/>
            <person name="Clifton S.W."/>
            <person name="Latreille P."/>
            <person name="Porwollik S."/>
            <person name="Sabo A."/>
            <person name="Meyer R."/>
            <person name="Bieri T."/>
            <person name="Ozersky P."/>
            <person name="McLellan M."/>
            <person name="Harkins C.R."/>
            <person name="Wang C."/>
            <person name="Nguyen C."/>
            <person name="Berghoff A."/>
            <person name="Elliott G."/>
            <person name="Kohlberg S."/>
            <person name="Strong C."/>
            <person name="Du F."/>
            <person name="Carter J."/>
            <person name="Kremizki C."/>
            <person name="Layman D."/>
            <person name="Leonard S."/>
            <person name="Sun H."/>
            <person name="Fulton L."/>
            <person name="Nash W."/>
            <person name="Miner T."/>
            <person name="Minx P."/>
            <person name="Delehaunty K."/>
            <person name="Fronick C."/>
            <person name="Magrini V."/>
            <person name="Nhan M."/>
            <person name="Warren W."/>
            <person name="Florea L."/>
            <person name="Spieth J."/>
            <person name="Wilson R.K."/>
        </authorList>
    </citation>
    <scope>NUCLEOTIDE SEQUENCE [LARGE SCALE GENOMIC DNA]</scope>
    <source>
        <strain>ATCC 9150 / SARB42</strain>
    </source>
</reference>
<dbReference type="EMBL" id="CP000026">
    <property type="protein sequence ID" value="AAV77011.1"/>
    <property type="molecule type" value="Genomic_DNA"/>
</dbReference>
<dbReference type="RefSeq" id="WP_000156291.1">
    <property type="nucleotide sequence ID" value="NC_006511.1"/>
</dbReference>
<dbReference type="KEGG" id="spt:SPA1040"/>
<dbReference type="HOGENOM" id="CLU_133645_0_0_6"/>
<dbReference type="Proteomes" id="UP000008185">
    <property type="component" value="Chromosome"/>
</dbReference>
<dbReference type="GO" id="GO:0005886">
    <property type="term" value="C:plasma membrane"/>
    <property type="evidence" value="ECO:0007669"/>
    <property type="project" value="UniProtKB-SubCell"/>
</dbReference>
<dbReference type="HAMAP" id="MF_01071">
    <property type="entry name" value="UPF0266"/>
    <property type="match status" value="1"/>
</dbReference>
<dbReference type="InterPro" id="IPR009328">
    <property type="entry name" value="DUF986"/>
</dbReference>
<dbReference type="NCBIfam" id="NF002791">
    <property type="entry name" value="PRK02913.1"/>
    <property type="match status" value="1"/>
</dbReference>
<dbReference type="Pfam" id="PF06173">
    <property type="entry name" value="DUF986"/>
    <property type="match status" value="1"/>
</dbReference>
<dbReference type="PIRSF" id="PIRSF020687">
    <property type="entry name" value="UCP020687"/>
    <property type="match status" value="1"/>
</dbReference>
<gene>
    <name evidence="1" type="primary">yobD</name>
    <name type="ordered locus">SPA1040</name>
</gene>
<evidence type="ECO:0000255" key="1">
    <source>
        <dbReference type="HAMAP-Rule" id="MF_01071"/>
    </source>
</evidence>
<comment type="subcellular location">
    <subcellularLocation>
        <location evidence="1">Cell inner membrane</location>
        <topology evidence="1">Multi-pass membrane protein</topology>
    </subcellularLocation>
</comment>
<comment type="similarity">
    <text evidence="1">Belongs to the UPF0266 family.</text>
</comment>
<sequence length="152" mass="17792">MTITDLVLILFIAALLVYALYDQFIMPRRNGPTLLSIALLRRGRVDSVIFVGLVAILIYNNVTSHGAQMTTWLLSALALMGFYIFWIRTPRIIFKQRGFFFANVWIEYNRIKEMNLSEDGVLVMQLEQRRLLIRVHNIDDLEKIYKLLIENQ</sequence>
<organism>
    <name type="scientific">Salmonella paratyphi A (strain ATCC 9150 / SARB42)</name>
    <dbReference type="NCBI Taxonomy" id="295319"/>
    <lineage>
        <taxon>Bacteria</taxon>
        <taxon>Pseudomonadati</taxon>
        <taxon>Pseudomonadota</taxon>
        <taxon>Gammaproteobacteria</taxon>
        <taxon>Enterobacterales</taxon>
        <taxon>Enterobacteriaceae</taxon>
        <taxon>Salmonella</taxon>
    </lineage>
</organism>
<name>YOBD_SALPA</name>
<protein>
    <recommendedName>
        <fullName evidence="1">UPF0266 membrane protein YobD</fullName>
    </recommendedName>
</protein>
<accession>Q5PI76</accession>
<keyword id="KW-0997">Cell inner membrane</keyword>
<keyword id="KW-1003">Cell membrane</keyword>
<keyword id="KW-0472">Membrane</keyword>
<keyword id="KW-0812">Transmembrane</keyword>
<keyword id="KW-1133">Transmembrane helix</keyword>
<proteinExistence type="inferred from homology"/>